<feature type="chain" id="PRO_0000173505" description="Septin homolog spn3">
    <location>
        <begin position="1"/>
        <end position="373"/>
    </location>
</feature>
<feature type="domain" description="Septin-type G" evidence="3">
    <location>
        <begin position="10"/>
        <end position="286"/>
    </location>
</feature>
<feature type="region of interest" description="G1 motif" evidence="3">
    <location>
        <begin position="20"/>
        <end position="27"/>
    </location>
</feature>
<feature type="region of interest" description="G3 motif" evidence="3">
    <location>
        <begin position="79"/>
        <end position="82"/>
    </location>
</feature>
<feature type="region of interest" description="G4 motif" evidence="3">
    <location>
        <begin position="161"/>
        <end position="164"/>
    </location>
</feature>
<feature type="coiled-coil region" evidence="2">
    <location>
        <begin position="311"/>
        <end position="357"/>
    </location>
</feature>
<feature type="binding site" evidence="1">
    <location>
        <begin position="20"/>
        <end position="27"/>
    </location>
    <ligand>
        <name>GTP</name>
        <dbReference type="ChEBI" id="CHEBI:37565"/>
    </ligand>
</feature>
<feature type="binding site" evidence="1">
    <location>
        <begin position="162"/>
        <end position="170"/>
    </location>
    <ligand>
        <name>GTP</name>
        <dbReference type="ChEBI" id="CHEBI:37565"/>
    </ligand>
</feature>
<feature type="binding site" evidence="1">
    <location>
        <position position="235"/>
    </location>
    <ligand>
        <name>GTP</name>
        <dbReference type="ChEBI" id="CHEBI:37565"/>
    </ligand>
</feature>
<feature type="modified residue" description="Phosphoserine" evidence="5">
    <location>
        <position position="303"/>
    </location>
</feature>
<proteinExistence type="evidence at protein level"/>
<organism>
    <name type="scientific">Schizosaccharomyces pombe (strain 972 / ATCC 24843)</name>
    <name type="common">Fission yeast</name>
    <dbReference type="NCBI Taxonomy" id="284812"/>
    <lineage>
        <taxon>Eukaryota</taxon>
        <taxon>Fungi</taxon>
        <taxon>Dikarya</taxon>
        <taxon>Ascomycota</taxon>
        <taxon>Taphrinomycotina</taxon>
        <taxon>Schizosaccharomycetes</taxon>
        <taxon>Schizosaccharomycetales</taxon>
        <taxon>Schizosaccharomycetaceae</taxon>
        <taxon>Schizosaccharomyces</taxon>
    </lineage>
</organism>
<sequence>MRTTKKSSKKGIPLNLMVVGDVGLGRTAFINTLCEKPLIRHNNNFDPAEASSVSPVEIVPYQTDIILEDGTKINLTVLDTPHFGEAIDNENNFDIILQYIESQYDNVLEEESRIKRNARFCDDRVHALIYFISPTGHGLRELDIELMRRLAPRVNIIPAIAKADSLTAQELQTTKEMINADIEYYKIPVYDFPYDIEEDEEAIINLSQQLRATIPFAIVSSDRLIEMNGQTVRGRAYPWGVVEVDNPRHSDFLALRSALFATHIEDLHNITSNQLYETYRTEKLSTSQLLLDSTVGLDGKNLSQHDQVLREDRLRAIELSVQKEIEEKRRQLLAREEALRALEEKLAASTAAMANASVSTLPSSVSSTNHSQS</sequence>
<name>SPN3_SCHPO</name>
<evidence type="ECO:0000250" key="1"/>
<evidence type="ECO:0000255" key="2"/>
<evidence type="ECO:0000255" key="3">
    <source>
        <dbReference type="PROSITE-ProRule" id="PRU01056"/>
    </source>
</evidence>
<evidence type="ECO:0000269" key="4">
    <source>
    </source>
</evidence>
<evidence type="ECO:0000269" key="5">
    <source>
    </source>
</evidence>
<evidence type="ECO:0000269" key="6">
    <source>
    </source>
</evidence>
<evidence type="ECO:0000305" key="7"/>
<evidence type="ECO:0000312" key="8">
    <source>
        <dbReference type="PomBase" id="SPBC16A3.01"/>
    </source>
</evidence>
<dbReference type="EMBL" id="U29889">
    <property type="protein sequence ID" value="AAB53691.2"/>
    <property type="status" value="ALT_INIT"/>
    <property type="molecule type" value="mRNA"/>
</dbReference>
<dbReference type="EMBL" id="CU329671">
    <property type="protein sequence ID" value="CAK9841109.1"/>
    <property type="molecule type" value="Genomic_DNA"/>
</dbReference>
<dbReference type="PIR" id="T52561">
    <property type="entry name" value="T52561"/>
</dbReference>
<dbReference type="SMR" id="P48008"/>
<dbReference type="BioGRID" id="276573">
    <property type="interactions" value="41"/>
</dbReference>
<dbReference type="FunCoup" id="P48008">
    <property type="interactions" value="25"/>
</dbReference>
<dbReference type="STRING" id="284812.P48008"/>
<dbReference type="iPTMnet" id="P48008"/>
<dbReference type="PaxDb" id="4896-SPBC16A3.01.1"/>
<dbReference type="EnsemblFungi" id="SPBC16A3.01.1">
    <property type="protein sequence ID" value="SPBC16A3.01.1:pep"/>
    <property type="gene ID" value="SPBC16A3.01"/>
</dbReference>
<dbReference type="PomBase" id="SPBC16A3.01">
    <property type="gene designation" value="spn3"/>
</dbReference>
<dbReference type="VEuPathDB" id="FungiDB:SPBC16A3.01"/>
<dbReference type="eggNOG" id="KOG2655">
    <property type="taxonomic scope" value="Eukaryota"/>
</dbReference>
<dbReference type="HOGENOM" id="CLU_017718_7_4_1"/>
<dbReference type="InParanoid" id="P48008"/>
<dbReference type="OMA" id="GYDSAMN"/>
<dbReference type="PhylomeDB" id="P48008"/>
<dbReference type="PRO" id="PR:P48008"/>
<dbReference type="Proteomes" id="UP000002485">
    <property type="component" value="Chromosome II"/>
</dbReference>
<dbReference type="GO" id="GO:0032153">
    <property type="term" value="C:cell division site"/>
    <property type="evidence" value="ECO:0007005"/>
    <property type="project" value="PomBase"/>
</dbReference>
<dbReference type="GO" id="GO:0032161">
    <property type="term" value="C:cleavage apparatus septin structure"/>
    <property type="evidence" value="ECO:0007669"/>
    <property type="project" value="UniProtKB-ARBA"/>
</dbReference>
<dbReference type="GO" id="GO:0005737">
    <property type="term" value="C:cytoplasm"/>
    <property type="evidence" value="ECO:0007005"/>
    <property type="project" value="PomBase"/>
</dbReference>
<dbReference type="GO" id="GO:0005829">
    <property type="term" value="C:cytosol"/>
    <property type="evidence" value="ECO:0007005"/>
    <property type="project" value="PomBase"/>
</dbReference>
<dbReference type="GO" id="GO:0036391">
    <property type="term" value="C:medial cortex septin ring"/>
    <property type="evidence" value="ECO:0000314"/>
    <property type="project" value="PomBase"/>
</dbReference>
<dbReference type="GO" id="GO:0015630">
    <property type="term" value="C:microtubule cytoskeleton"/>
    <property type="evidence" value="ECO:0000318"/>
    <property type="project" value="GO_Central"/>
</dbReference>
<dbReference type="GO" id="GO:0120104">
    <property type="term" value="C:mitotic actomyosin contractile ring, proximal layer"/>
    <property type="evidence" value="ECO:0000314"/>
    <property type="project" value="PomBase"/>
</dbReference>
<dbReference type="GO" id="GO:0032151">
    <property type="term" value="C:mitotic septin complex"/>
    <property type="evidence" value="ECO:0000314"/>
    <property type="project" value="PomBase"/>
</dbReference>
<dbReference type="GO" id="GO:0032991">
    <property type="term" value="C:protein-containing complex"/>
    <property type="evidence" value="ECO:0007669"/>
    <property type="project" value="UniProtKB-ARBA"/>
</dbReference>
<dbReference type="GO" id="GO:0031105">
    <property type="term" value="C:septin complex"/>
    <property type="evidence" value="ECO:0000318"/>
    <property type="project" value="GO_Central"/>
</dbReference>
<dbReference type="GO" id="GO:0005940">
    <property type="term" value="C:septin ring"/>
    <property type="evidence" value="ECO:0007669"/>
    <property type="project" value="UniProtKB-ARBA"/>
</dbReference>
<dbReference type="GO" id="GO:0005525">
    <property type="term" value="F:GTP binding"/>
    <property type="evidence" value="ECO:0007669"/>
    <property type="project" value="UniProtKB-KW"/>
</dbReference>
<dbReference type="GO" id="GO:0003924">
    <property type="term" value="F:GTPase activity"/>
    <property type="evidence" value="ECO:0000318"/>
    <property type="project" value="GO_Central"/>
</dbReference>
<dbReference type="GO" id="GO:0060090">
    <property type="term" value="F:molecular adaptor activity"/>
    <property type="evidence" value="ECO:0000318"/>
    <property type="project" value="GO_Central"/>
</dbReference>
<dbReference type="GO" id="GO:0061640">
    <property type="term" value="P:cytoskeleton-dependent cytokinesis"/>
    <property type="evidence" value="ECO:0000318"/>
    <property type="project" value="GO_Central"/>
</dbReference>
<dbReference type="GO" id="GO:0000281">
    <property type="term" value="P:mitotic cytokinesis"/>
    <property type="evidence" value="ECO:0000315"/>
    <property type="project" value="PomBase"/>
</dbReference>
<dbReference type="GO" id="GO:0008104">
    <property type="term" value="P:protein localization"/>
    <property type="evidence" value="ECO:0000318"/>
    <property type="project" value="GO_Central"/>
</dbReference>
<dbReference type="GO" id="GO:0000921">
    <property type="term" value="P:septin ring assembly"/>
    <property type="evidence" value="ECO:0000315"/>
    <property type="project" value="PomBase"/>
</dbReference>
<dbReference type="CDD" id="cd01850">
    <property type="entry name" value="CDC_Septin"/>
    <property type="match status" value="1"/>
</dbReference>
<dbReference type="FunFam" id="3.40.50.300:FF:000162">
    <property type="entry name" value="septin-7 isoform X1"/>
    <property type="match status" value="1"/>
</dbReference>
<dbReference type="Gene3D" id="3.40.50.300">
    <property type="entry name" value="P-loop containing nucleotide triphosphate hydrolases"/>
    <property type="match status" value="1"/>
</dbReference>
<dbReference type="InterPro" id="IPR030379">
    <property type="entry name" value="G_SEPTIN_dom"/>
</dbReference>
<dbReference type="InterPro" id="IPR027417">
    <property type="entry name" value="P-loop_NTPase"/>
</dbReference>
<dbReference type="InterPro" id="IPR016491">
    <property type="entry name" value="Septin"/>
</dbReference>
<dbReference type="PANTHER" id="PTHR18884">
    <property type="entry name" value="SEPTIN"/>
    <property type="match status" value="1"/>
</dbReference>
<dbReference type="Pfam" id="PF00735">
    <property type="entry name" value="Septin"/>
    <property type="match status" value="1"/>
</dbReference>
<dbReference type="PIRSF" id="PIRSF006698">
    <property type="entry name" value="Septin"/>
    <property type="match status" value="1"/>
</dbReference>
<dbReference type="SUPFAM" id="SSF52540">
    <property type="entry name" value="P-loop containing nucleoside triphosphate hydrolases"/>
    <property type="match status" value="1"/>
</dbReference>
<dbReference type="PROSITE" id="PS51719">
    <property type="entry name" value="G_SEPTIN"/>
    <property type="match status" value="1"/>
</dbReference>
<comment type="function">
    <text evidence="4">Plays a role in the cell cycle. Involved in a late stage of septum formation leading to the separation of the daughter cells.</text>
</comment>
<comment type="subunit">
    <text evidence="4">Component of the septin complex composed of two copies of each spn1, spn2, spn3 and spn4.</text>
</comment>
<comment type="subcellular location">
    <subcellularLocation>
        <location evidence="4 6">Cytoplasm</location>
        <location evidence="4 6">Cell cortex</location>
    </subcellularLocation>
    <text evidence="4 6">Localizes to the medial ring at the cell cortex of dividing cells.</text>
</comment>
<comment type="similarity">
    <text evidence="3">Belongs to the TRAFAC class TrmE-Era-EngA-EngB-Septin-like GTPase superfamily. Septin GTPase family.</text>
</comment>
<comment type="sequence caution" evidence="7">
    <conflict type="erroneous initiation">
        <sequence resource="EMBL-CDS" id="AAB53691"/>
    </conflict>
    <text>Extended N-terminus.</text>
</comment>
<reference key="1">
    <citation type="submission" date="1996-07" db="EMBL/GenBank/DDBJ databases">
        <authorList>
            <person name="Al-Awar O.S."/>
            <person name="Pugh T.A."/>
            <person name="Kim H.B."/>
            <person name="Valencik M.L."/>
            <person name="Pringle J.R."/>
        </authorList>
    </citation>
    <scope>NUCLEOTIDE SEQUENCE [MRNA]</scope>
</reference>
<reference key="2">
    <citation type="submission" date="2001-09" db="EMBL/GenBank/DDBJ databases">
        <authorList>
            <person name="Al-Awar O.S."/>
        </authorList>
    </citation>
    <scope>SEQUENCE REVISION</scope>
</reference>
<reference key="3">
    <citation type="journal article" date="2002" name="Nature">
        <title>The genome sequence of Schizosaccharomyces pombe.</title>
        <authorList>
            <person name="Wood V."/>
            <person name="Gwilliam R."/>
            <person name="Rajandream M.A."/>
            <person name="Lyne M.H."/>
            <person name="Lyne R."/>
            <person name="Stewart A."/>
            <person name="Sgouros J.G."/>
            <person name="Peat N."/>
            <person name="Hayles J."/>
            <person name="Baker S.G."/>
            <person name="Basham D."/>
            <person name="Bowman S."/>
            <person name="Brooks K."/>
            <person name="Brown D."/>
            <person name="Brown S."/>
            <person name="Chillingworth T."/>
            <person name="Churcher C.M."/>
            <person name="Collins M."/>
            <person name="Connor R."/>
            <person name="Cronin A."/>
            <person name="Davis P."/>
            <person name="Feltwell T."/>
            <person name="Fraser A."/>
            <person name="Gentles S."/>
            <person name="Goble A."/>
            <person name="Hamlin N."/>
            <person name="Harris D.E."/>
            <person name="Hidalgo J."/>
            <person name="Hodgson G."/>
            <person name="Holroyd S."/>
            <person name="Hornsby T."/>
            <person name="Howarth S."/>
            <person name="Huckle E.J."/>
            <person name="Hunt S."/>
            <person name="Jagels K."/>
            <person name="James K.D."/>
            <person name="Jones L."/>
            <person name="Jones M."/>
            <person name="Leather S."/>
            <person name="McDonald S."/>
            <person name="McLean J."/>
            <person name="Mooney P."/>
            <person name="Moule S."/>
            <person name="Mungall K.L."/>
            <person name="Murphy L.D."/>
            <person name="Niblett D."/>
            <person name="Odell C."/>
            <person name="Oliver K."/>
            <person name="O'Neil S."/>
            <person name="Pearson D."/>
            <person name="Quail M.A."/>
            <person name="Rabbinowitsch E."/>
            <person name="Rutherford K.M."/>
            <person name="Rutter S."/>
            <person name="Saunders D."/>
            <person name="Seeger K."/>
            <person name="Sharp S."/>
            <person name="Skelton J."/>
            <person name="Simmonds M.N."/>
            <person name="Squares R."/>
            <person name="Squares S."/>
            <person name="Stevens K."/>
            <person name="Taylor K."/>
            <person name="Taylor R.G."/>
            <person name="Tivey A."/>
            <person name="Walsh S.V."/>
            <person name="Warren T."/>
            <person name="Whitehead S."/>
            <person name="Woodward J.R."/>
            <person name="Volckaert G."/>
            <person name="Aert R."/>
            <person name="Robben J."/>
            <person name="Grymonprez B."/>
            <person name="Weltjens I."/>
            <person name="Vanstreels E."/>
            <person name="Rieger M."/>
            <person name="Schaefer M."/>
            <person name="Mueller-Auer S."/>
            <person name="Gabel C."/>
            <person name="Fuchs M."/>
            <person name="Duesterhoeft A."/>
            <person name="Fritzc C."/>
            <person name="Holzer E."/>
            <person name="Moestl D."/>
            <person name="Hilbert H."/>
            <person name="Borzym K."/>
            <person name="Langer I."/>
            <person name="Beck A."/>
            <person name="Lehrach H."/>
            <person name="Reinhardt R."/>
            <person name="Pohl T.M."/>
            <person name="Eger P."/>
            <person name="Zimmermann W."/>
            <person name="Wedler H."/>
            <person name="Wambutt R."/>
            <person name="Purnelle B."/>
            <person name="Goffeau A."/>
            <person name="Cadieu E."/>
            <person name="Dreano S."/>
            <person name="Gloux S."/>
            <person name="Lelaure V."/>
            <person name="Mottier S."/>
            <person name="Galibert F."/>
            <person name="Aves S.J."/>
            <person name="Xiang Z."/>
            <person name="Hunt C."/>
            <person name="Moore K."/>
            <person name="Hurst S.M."/>
            <person name="Lucas M."/>
            <person name="Rochet M."/>
            <person name="Gaillardin C."/>
            <person name="Tallada V.A."/>
            <person name="Garzon A."/>
            <person name="Thode G."/>
            <person name="Daga R.R."/>
            <person name="Cruzado L."/>
            <person name="Jimenez J."/>
            <person name="Sanchez M."/>
            <person name="del Rey F."/>
            <person name="Benito J."/>
            <person name="Dominguez A."/>
            <person name="Revuelta J.L."/>
            <person name="Moreno S."/>
            <person name="Armstrong J."/>
            <person name="Forsburg S.L."/>
            <person name="Cerutti L."/>
            <person name="Lowe T."/>
            <person name="McCombie W.R."/>
            <person name="Paulsen I."/>
            <person name="Potashkin J."/>
            <person name="Shpakovski G.V."/>
            <person name="Ussery D."/>
            <person name="Barrell B.G."/>
            <person name="Nurse P."/>
        </authorList>
    </citation>
    <scope>NUCLEOTIDE SEQUENCE [LARGE SCALE GENOMIC DNA]</scope>
    <source>
        <strain>972 / ATCC 24843</strain>
    </source>
</reference>
<reference key="4">
    <citation type="journal article" date="2004" name="Mol. Biol. Cell">
        <title>Requirements of fission yeast septins for complex formation, localization, and function.</title>
        <authorList>
            <person name="An H."/>
            <person name="Morrell J.L."/>
            <person name="Jennings J.L."/>
            <person name="Link A.J."/>
            <person name="Gould K.L."/>
        </authorList>
    </citation>
    <scope>FUNCTION</scope>
    <scope>SUBCELLULAR LOCATION</scope>
    <scope>IDENTIFICATION IN THE SEPTIN COMPLEX</scope>
    <scope>IDENTIFICATION BY MASS SPECTROMETRY</scope>
</reference>
<reference key="5">
    <citation type="journal article" date="2008" name="J. Proteome Res.">
        <title>Phosphoproteome analysis of fission yeast.</title>
        <authorList>
            <person name="Wilson-Grady J.T."/>
            <person name="Villen J."/>
            <person name="Gygi S.P."/>
        </authorList>
    </citation>
    <scope>PHOSPHORYLATION [LARGE SCALE ANALYSIS] AT SER-303</scope>
    <scope>IDENTIFICATION BY MASS SPECTROMETRY</scope>
</reference>
<reference key="6">
    <citation type="journal article" date="2017" name="Elife">
        <title>Nanoscale architecture of the Schizosaccharomyces pombe contractile ring.</title>
        <authorList>
            <person name="McDonald N.A."/>
            <person name="Lind A.L."/>
            <person name="Smith S.E."/>
            <person name="Li R."/>
            <person name="Gould K.L."/>
        </authorList>
    </citation>
    <scope>SUBCELLULAR LOCATION</scope>
</reference>
<keyword id="KW-0131">Cell cycle</keyword>
<keyword id="KW-0132">Cell division</keyword>
<keyword id="KW-0175">Coiled coil</keyword>
<keyword id="KW-0963">Cytoplasm</keyword>
<keyword id="KW-0342">GTP-binding</keyword>
<keyword id="KW-0498">Mitosis</keyword>
<keyword id="KW-0547">Nucleotide-binding</keyword>
<keyword id="KW-0597">Phosphoprotein</keyword>
<keyword id="KW-1185">Reference proteome</keyword>
<accession>P48008</accession>
<accession>A0AAN2L379</accession>
<accession>Q9HGN0</accession>
<gene>
    <name type="primary">spn3</name>
    <name evidence="8" type="ORF">SPBC16A3.01</name>
    <name type="ORF">SPBC543.01c</name>
</gene>
<protein>
    <recommendedName>
        <fullName>Septin homolog spn3</fullName>
    </recommendedName>
</protein>